<reference key="1">
    <citation type="journal article" date="1998" name="J. Bacteriol.">
        <title>Differential regulation of multiple flagellins in Vibrio cholerae.</title>
        <authorList>
            <person name="Klose K.E."/>
            <person name="Mekalanos J.J."/>
        </authorList>
    </citation>
    <scope>NUCLEOTIDE SEQUENCE [GENOMIC DNA]</scope>
</reference>
<reference key="2">
    <citation type="submission" date="2007-03" db="EMBL/GenBank/DDBJ databases">
        <authorList>
            <person name="Heidelberg J."/>
        </authorList>
    </citation>
    <scope>NUCLEOTIDE SEQUENCE [LARGE SCALE GENOMIC DNA]</scope>
    <source>
        <strain>ATCC 39541 / Classical Ogawa 395 / O395</strain>
    </source>
</reference>
<reference key="3">
    <citation type="journal article" date="2008" name="PLoS ONE">
        <title>A recalibrated molecular clock and independent origins for the cholera pandemic clones.</title>
        <authorList>
            <person name="Feng L."/>
            <person name="Reeves P.R."/>
            <person name="Lan R."/>
            <person name="Ren Y."/>
            <person name="Gao C."/>
            <person name="Zhou Z."/>
            <person name="Ren Y."/>
            <person name="Cheng J."/>
            <person name="Wang W."/>
            <person name="Wang J."/>
            <person name="Qian W."/>
            <person name="Li D."/>
            <person name="Wang L."/>
        </authorList>
    </citation>
    <scope>NUCLEOTIDE SEQUENCE [LARGE SCALE GENOMIC DNA]</scope>
    <source>
        <strain>ATCC 39541 / Classical Ogawa 395 / O395</strain>
    </source>
</reference>
<gene>
    <name type="primary">flaE</name>
    <name type="ordered locus">VC0395_A1728</name>
    <name type="ordered locus">VC395_2258</name>
</gene>
<accession>A5F6A9</accession>
<accession>C3M2X6</accession>
<accession>Q56603</accession>
<accession>Q9KQ60</accession>
<comment type="function">
    <text>Flagellin is the subunit protein which polymerizes to form the filaments of bacterial flagella. FlaE is not essential for flagellar synthesis and motility.</text>
</comment>
<comment type="subunit">
    <text>Heteromer of multiple flagellin subunits including FlaA, FlaB, FlaC, FlaD and FlaE.</text>
</comment>
<comment type="subcellular location">
    <subcellularLocation>
        <location>Secreted</location>
    </subcellularLocation>
    <subcellularLocation>
        <location>Bacterial flagellum</location>
    </subcellularLocation>
</comment>
<comment type="miscellaneous">
    <text>V.cholerae is able to differentially regulate the flagellins within the flagellum maybe to produce flagella which are particularly suited for motility within a given environment.</text>
</comment>
<comment type="similarity">
    <text evidence="2">Belongs to the bacterial flagellin family.</text>
</comment>
<protein>
    <recommendedName>
        <fullName>Flagellin E</fullName>
    </recommendedName>
</protein>
<sequence>MAMTVNTNVSALVAQRHLNSASEMLNQSLERLSSGNRINSAKDDAAGLQISNRLETQMRGLGIAVRNANDGISIMQTAEGAMQETTQLLQRMRDLSLQSANGSNSAAERVALQEEMAALNDELNRIAETTSFAGRKLLNGQFMKASFQIGASSGEAVQLSLRNMRSDSLEMGGFSYVAAALADKQWQVTKGKQQLNISYVNAQGENENIQIQAKEGDDIEELATYINGKTDKVSASVNEKGQLQLYIAGKETSGTLSFSGSLANELQMNLLGYEAVDNLDISSAGGAQRAVSVIDTALKYVDGHRSELGAMQNRFQHAISNLDNVHENLAASNSRIKDADYAKETTQMIKQQILQQVSTSVLAQAKRQPKFVLFLLRN</sequence>
<proteinExistence type="inferred from homology"/>
<dbReference type="EMBL" id="AF007122">
    <property type="protein sequence ID" value="AAC01555.1"/>
    <property type="molecule type" value="Genomic_DNA"/>
</dbReference>
<dbReference type="EMBL" id="CP000627">
    <property type="protein sequence ID" value="ABQ21740.1"/>
    <property type="molecule type" value="Genomic_DNA"/>
</dbReference>
<dbReference type="EMBL" id="CP001235">
    <property type="protein sequence ID" value="ACP10250.1"/>
    <property type="molecule type" value="Genomic_DNA"/>
</dbReference>
<dbReference type="RefSeq" id="WP_001251948.1">
    <property type="nucleotide sequence ID" value="NZ_JAACZH010000001.1"/>
</dbReference>
<dbReference type="SMR" id="A5F6A9"/>
<dbReference type="KEGG" id="vco:VC0395_A1728"/>
<dbReference type="KEGG" id="vcr:VC395_2258"/>
<dbReference type="PATRIC" id="fig|345073.21.peg.2182"/>
<dbReference type="eggNOG" id="COG1344">
    <property type="taxonomic scope" value="Bacteria"/>
</dbReference>
<dbReference type="HOGENOM" id="CLU_011142_7_2_6"/>
<dbReference type="OrthoDB" id="9796789at2"/>
<dbReference type="Proteomes" id="UP000000249">
    <property type="component" value="Chromosome 2"/>
</dbReference>
<dbReference type="GO" id="GO:0009288">
    <property type="term" value="C:bacterial-type flagellum"/>
    <property type="evidence" value="ECO:0007669"/>
    <property type="project" value="UniProtKB-SubCell"/>
</dbReference>
<dbReference type="GO" id="GO:0005576">
    <property type="term" value="C:extracellular region"/>
    <property type="evidence" value="ECO:0007669"/>
    <property type="project" value="UniProtKB-SubCell"/>
</dbReference>
<dbReference type="GO" id="GO:0005198">
    <property type="term" value="F:structural molecule activity"/>
    <property type="evidence" value="ECO:0007669"/>
    <property type="project" value="InterPro"/>
</dbReference>
<dbReference type="Gene3D" id="3.30.70.2120">
    <property type="match status" value="1"/>
</dbReference>
<dbReference type="Gene3D" id="1.20.1330.10">
    <property type="entry name" value="f41 fragment of flagellin, N-terminal domain"/>
    <property type="match status" value="1"/>
</dbReference>
<dbReference type="Gene3D" id="6.10.10.10">
    <property type="entry name" value="Flagellar export chaperone, C-terminal domain"/>
    <property type="match status" value="1"/>
</dbReference>
<dbReference type="InterPro" id="IPR001492">
    <property type="entry name" value="Flagellin"/>
</dbReference>
<dbReference type="InterPro" id="IPR046358">
    <property type="entry name" value="Flagellin_C"/>
</dbReference>
<dbReference type="InterPro" id="IPR042187">
    <property type="entry name" value="Flagellin_C_sub2"/>
</dbReference>
<dbReference type="InterPro" id="IPR010810">
    <property type="entry name" value="Flagellin_hook_IN_motif"/>
</dbReference>
<dbReference type="InterPro" id="IPR001029">
    <property type="entry name" value="Flagellin_N"/>
</dbReference>
<dbReference type="NCBIfam" id="NF006466">
    <property type="entry name" value="PRK08869.1-1"/>
    <property type="match status" value="1"/>
</dbReference>
<dbReference type="NCBIfam" id="NF006468">
    <property type="entry name" value="PRK08869.1-3"/>
    <property type="match status" value="1"/>
</dbReference>
<dbReference type="NCBIfam" id="NF006469">
    <property type="entry name" value="PRK08869.1-4"/>
    <property type="match status" value="1"/>
</dbReference>
<dbReference type="PANTHER" id="PTHR42792">
    <property type="entry name" value="FLAGELLIN"/>
    <property type="match status" value="1"/>
</dbReference>
<dbReference type="PANTHER" id="PTHR42792:SF2">
    <property type="entry name" value="FLAGELLIN"/>
    <property type="match status" value="1"/>
</dbReference>
<dbReference type="Pfam" id="PF00700">
    <property type="entry name" value="Flagellin_C"/>
    <property type="match status" value="1"/>
</dbReference>
<dbReference type="Pfam" id="PF07196">
    <property type="entry name" value="Flagellin_IN"/>
    <property type="match status" value="1"/>
</dbReference>
<dbReference type="Pfam" id="PF00669">
    <property type="entry name" value="Flagellin_N"/>
    <property type="match status" value="1"/>
</dbReference>
<dbReference type="PRINTS" id="PR00207">
    <property type="entry name" value="FLAGELLIN"/>
</dbReference>
<dbReference type="SUPFAM" id="SSF64518">
    <property type="entry name" value="Phase 1 flagellin"/>
    <property type="match status" value="1"/>
</dbReference>
<feature type="chain" id="PRO_0000321850" description="Flagellin E">
    <location>
        <begin position="1"/>
        <end position="378"/>
    </location>
</feature>
<feature type="coiled-coil region" evidence="1">
    <location>
        <begin position="98"/>
        <end position="139"/>
    </location>
</feature>
<feature type="coiled-coil region" evidence="1">
    <location>
        <begin position="311"/>
        <end position="339"/>
    </location>
</feature>
<feature type="sequence conflict" description="In Ref. 1; AAC01555." evidence="2" ref="1">
    <original>T</original>
    <variation>A</variation>
    <location>
        <position position="296"/>
    </location>
</feature>
<name>FLAE_VIBC3</name>
<organism>
    <name type="scientific">Vibrio cholerae serotype O1 (strain ATCC 39541 / Classical Ogawa 395 / O395)</name>
    <dbReference type="NCBI Taxonomy" id="345073"/>
    <lineage>
        <taxon>Bacteria</taxon>
        <taxon>Pseudomonadati</taxon>
        <taxon>Pseudomonadota</taxon>
        <taxon>Gammaproteobacteria</taxon>
        <taxon>Vibrionales</taxon>
        <taxon>Vibrionaceae</taxon>
        <taxon>Vibrio</taxon>
    </lineage>
</organism>
<keyword id="KW-0975">Bacterial flagellum</keyword>
<keyword id="KW-0175">Coiled coil</keyword>
<keyword id="KW-0964">Secreted</keyword>
<evidence type="ECO:0000255" key="1"/>
<evidence type="ECO:0000305" key="2"/>